<proteinExistence type="inferred from homology"/>
<protein>
    <recommendedName>
        <fullName evidence="1">N-succinylglutamate 5-semialdehyde dehydrogenase</fullName>
        <ecNumber evidence="1">1.2.1.71</ecNumber>
    </recommendedName>
    <alternativeName>
        <fullName evidence="1">Succinylglutamic semialdehyde dehydrogenase</fullName>
        <shortName evidence="1">SGSD</shortName>
    </alternativeName>
</protein>
<keyword id="KW-0056">Arginine metabolism</keyword>
<keyword id="KW-0520">NAD</keyword>
<keyword id="KW-0560">Oxidoreductase</keyword>
<dbReference type="EC" id="1.2.1.71" evidence="1"/>
<dbReference type="EMBL" id="CP000901">
    <property type="protein sequence ID" value="ABX86840.1"/>
    <property type="molecule type" value="Genomic_DNA"/>
</dbReference>
<dbReference type="RefSeq" id="WP_002212030.1">
    <property type="nucleotide sequence ID" value="NZ_CP009935.1"/>
</dbReference>
<dbReference type="SMR" id="A9QZ61"/>
<dbReference type="KEGG" id="ypg:YpAngola_A2518"/>
<dbReference type="UniPathway" id="UPA00185">
    <property type="reaction ID" value="UER00282"/>
</dbReference>
<dbReference type="GO" id="GO:0043824">
    <property type="term" value="F:succinylglutamate-semialdehyde dehydrogenase activity"/>
    <property type="evidence" value="ECO:0007669"/>
    <property type="project" value="UniProtKB-EC"/>
</dbReference>
<dbReference type="GO" id="GO:0019544">
    <property type="term" value="P:arginine catabolic process to glutamate"/>
    <property type="evidence" value="ECO:0007669"/>
    <property type="project" value="UniProtKB-UniRule"/>
</dbReference>
<dbReference type="GO" id="GO:0019545">
    <property type="term" value="P:arginine catabolic process to succinate"/>
    <property type="evidence" value="ECO:0007669"/>
    <property type="project" value="UniProtKB-UniRule"/>
</dbReference>
<dbReference type="CDD" id="cd07095">
    <property type="entry name" value="ALDH_SGSD_AstD"/>
    <property type="match status" value="1"/>
</dbReference>
<dbReference type="FunFam" id="3.40.309.10:FF:000013">
    <property type="entry name" value="N-succinylglutamate 5-semialdehyde dehydrogenase"/>
    <property type="match status" value="1"/>
</dbReference>
<dbReference type="FunFam" id="3.40.605.10:FF:000010">
    <property type="entry name" value="N-succinylglutamate 5-semialdehyde dehydrogenase"/>
    <property type="match status" value="1"/>
</dbReference>
<dbReference type="Gene3D" id="3.40.605.10">
    <property type="entry name" value="Aldehyde Dehydrogenase, Chain A, domain 1"/>
    <property type="match status" value="1"/>
</dbReference>
<dbReference type="Gene3D" id="3.40.309.10">
    <property type="entry name" value="Aldehyde Dehydrogenase, Chain A, domain 2"/>
    <property type="match status" value="1"/>
</dbReference>
<dbReference type="HAMAP" id="MF_01174">
    <property type="entry name" value="Aldedh_AstD"/>
    <property type="match status" value="1"/>
</dbReference>
<dbReference type="InterPro" id="IPR016161">
    <property type="entry name" value="Ald_DH/histidinol_DH"/>
</dbReference>
<dbReference type="InterPro" id="IPR016163">
    <property type="entry name" value="Ald_DH_C"/>
</dbReference>
<dbReference type="InterPro" id="IPR016160">
    <property type="entry name" value="Ald_DH_CS_CYS"/>
</dbReference>
<dbReference type="InterPro" id="IPR029510">
    <property type="entry name" value="Ald_DH_CS_GLU"/>
</dbReference>
<dbReference type="InterPro" id="IPR016162">
    <property type="entry name" value="Ald_DH_N"/>
</dbReference>
<dbReference type="InterPro" id="IPR015590">
    <property type="entry name" value="Aldehyde_DH_dom"/>
</dbReference>
<dbReference type="InterPro" id="IPR017649">
    <property type="entry name" value="SuccinylGlu_semiald_DH_AstD"/>
</dbReference>
<dbReference type="NCBIfam" id="TIGR03240">
    <property type="entry name" value="arg_catab_astD"/>
    <property type="match status" value="1"/>
</dbReference>
<dbReference type="NCBIfam" id="NF006992">
    <property type="entry name" value="PRK09457.1"/>
    <property type="match status" value="1"/>
</dbReference>
<dbReference type="PANTHER" id="PTHR11699">
    <property type="entry name" value="ALDEHYDE DEHYDROGENASE-RELATED"/>
    <property type="match status" value="1"/>
</dbReference>
<dbReference type="Pfam" id="PF00171">
    <property type="entry name" value="Aldedh"/>
    <property type="match status" value="1"/>
</dbReference>
<dbReference type="SUPFAM" id="SSF53720">
    <property type="entry name" value="ALDH-like"/>
    <property type="match status" value="1"/>
</dbReference>
<dbReference type="PROSITE" id="PS00070">
    <property type="entry name" value="ALDEHYDE_DEHYDR_CYS"/>
    <property type="match status" value="1"/>
</dbReference>
<dbReference type="PROSITE" id="PS00687">
    <property type="entry name" value="ALDEHYDE_DEHYDR_GLU"/>
    <property type="match status" value="1"/>
</dbReference>
<gene>
    <name evidence="1" type="primary">astD</name>
    <name type="ordered locus">YpAngola_A2518</name>
</gene>
<evidence type="ECO:0000255" key="1">
    <source>
        <dbReference type="HAMAP-Rule" id="MF_01174"/>
    </source>
</evidence>
<reference key="1">
    <citation type="journal article" date="2010" name="J. Bacteriol.">
        <title>Genome sequence of the deep-rooted Yersinia pestis strain Angola reveals new insights into the evolution and pangenome of the plague bacterium.</title>
        <authorList>
            <person name="Eppinger M."/>
            <person name="Worsham P.L."/>
            <person name="Nikolich M.P."/>
            <person name="Riley D.R."/>
            <person name="Sebastian Y."/>
            <person name="Mou S."/>
            <person name="Achtman M."/>
            <person name="Lindler L.E."/>
            <person name="Ravel J."/>
        </authorList>
    </citation>
    <scope>NUCLEOTIDE SEQUENCE [LARGE SCALE GENOMIC DNA]</scope>
    <source>
        <strain>Angola</strain>
    </source>
</reference>
<organism>
    <name type="scientific">Yersinia pestis bv. Antiqua (strain Angola)</name>
    <dbReference type="NCBI Taxonomy" id="349746"/>
    <lineage>
        <taxon>Bacteria</taxon>
        <taxon>Pseudomonadati</taxon>
        <taxon>Pseudomonadota</taxon>
        <taxon>Gammaproteobacteria</taxon>
        <taxon>Enterobacterales</taxon>
        <taxon>Yersiniaceae</taxon>
        <taxon>Yersinia</taxon>
    </lineage>
</organism>
<name>ASTD_YERPG</name>
<comment type="function">
    <text evidence="1">Catalyzes the NAD-dependent reduction of succinylglutamate semialdehyde into succinylglutamate.</text>
</comment>
<comment type="catalytic activity">
    <reaction evidence="1">
        <text>N-succinyl-L-glutamate 5-semialdehyde + NAD(+) + H2O = N-succinyl-L-glutamate + NADH + 2 H(+)</text>
        <dbReference type="Rhea" id="RHEA:10812"/>
        <dbReference type="ChEBI" id="CHEBI:15377"/>
        <dbReference type="ChEBI" id="CHEBI:15378"/>
        <dbReference type="ChEBI" id="CHEBI:57540"/>
        <dbReference type="ChEBI" id="CHEBI:57945"/>
        <dbReference type="ChEBI" id="CHEBI:58520"/>
        <dbReference type="ChEBI" id="CHEBI:58763"/>
        <dbReference type="EC" id="1.2.1.71"/>
    </reaction>
</comment>
<comment type="pathway">
    <text evidence="1">Amino-acid degradation; L-arginine degradation via AST pathway; L-glutamate and succinate from L-arginine: step 4/5.</text>
</comment>
<comment type="similarity">
    <text evidence="1">Belongs to the aldehyde dehydrogenase family. AstD subfamily.</text>
</comment>
<accession>A9QZ61</accession>
<feature type="chain" id="PRO_1000138066" description="N-succinylglutamate 5-semialdehyde dehydrogenase">
    <location>
        <begin position="1"/>
        <end position="505"/>
    </location>
</feature>
<feature type="active site" evidence="1">
    <location>
        <position position="257"/>
    </location>
</feature>
<feature type="active site" evidence="1">
    <location>
        <position position="291"/>
    </location>
</feature>
<feature type="binding site" evidence="1">
    <location>
        <begin position="234"/>
        <end position="239"/>
    </location>
    <ligand>
        <name>NAD(+)</name>
        <dbReference type="ChEBI" id="CHEBI:57540"/>
    </ligand>
</feature>
<sequence length="505" mass="54765">MSQHVMFNAVLSSHPALFIQGEWRIGNGVSFEKQDPMSQQRLWQARAADHTDVTLACHAARAAFPAWARASLEQRATVIQQFAALLEQHKQSLARTISLETSKPYWETLTEVQAMIGKVAISLQAYQTRTGHSQTPMGDSMSVLRHRPHGVLAVFGPYNFPGHLPNGHIVPALLAGNTVVFKPSELTPWTAEETVKLWQQAGIPDGVLNLVQGGRETGEALAAQPDIDGLLFTGSAHTGYHLHRQLAGQPEKMLALEMGGNNALIVEQVKDRDAVVNLAIQSAFISAGQRCTCSRRLLVKTGAEGDAFLLRFTAVAQALRIGRWDEQPAPFMGAVISSQAAERMLAAQQHLLLLGGESLLNMTRPDSQSALLTPGIIDITNISEVPDEEYFGPLVSVIRYTDFTEALKIANQTRFGLAVGLVSEDRQQFEQLLLEARAGIVNWNKPLTGASSAAPFGGVGASGNHRPSAFYAADYCAWPMASLECEHLTLPATLSPGISFDLPKV</sequence>